<organism>
    <name type="scientific">Arabidopsis thaliana</name>
    <name type="common">Mouse-ear cress</name>
    <dbReference type="NCBI Taxonomy" id="3702"/>
    <lineage>
        <taxon>Eukaryota</taxon>
        <taxon>Viridiplantae</taxon>
        <taxon>Streptophyta</taxon>
        <taxon>Embryophyta</taxon>
        <taxon>Tracheophyta</taxon>
        <taxon>Spermatophyta</taxon>
        <taxon>Magnoliopsida</taxon>
        <taxon>eudicotyledons</taxon>
        <taxon>Gunneridae</taxon>
        <taxon>Pentapetalae</taxon>
        <taxon>rosids</taxon>
        <taxon>malvids</taxon>
        <taxon>Brassicales</taxon>
        <taxon>Brassicaceae</taxon>
        <taxon>Camelineae</taxon>
        <taxon>Arabidopsis</taxon>
    </lineage>
</organism>
<gene>
    <name evidence="2" type="primary">LFG4</name>
    <name evidence="4" type="ordered locus">At1g03070</name>
    <name evidence="5" type="ORF">F10O3.11</name>
</gene>
<reference key="1">
    <citation type="journal article" date="2000" name="Nature">
        <title>Sequence and analysis of chromosome 1 of the plant Arabidopsis thaliana.</title>
        <authorList>
            <person name="Theologis A."/>
            <person name="Ecker J.R."/>
            <person name="Palm C.J."/>
            <person name="Federspiel N.A."/>
            <person name="Kaul S."/>
            <person name="White O."/>
            <person name="Alonso J."/>
            <person name="Altafi H."/>
            <person name="Araujo R."/>
            <person name="Bowman C.L."/>
            <person name="Brooks S.Y."/>
            <person name="Buehler E."/>
            <person name="Chan A."/>
            <person name="Chao Q."/>
            <person name="Chen H."/>
            <person name="Cheuk R.F."/>
            <person name="Chin C.W."/>
            <person name="Chung M.K."/>
            <person name="Conn L."/>
            <person name="Conway A.B."/>
            <person name="Conway A.R."/>
            <person name="Creasy T.H."/>
            <person name="Dewar K."/>
            <person name="Dunn P."/>
            <person name="Etgu P."/>
            <person name="Feldblyum T.V."/>
            <person name="Feng J.-D."/>
            <person name="Fong B."/>
            <person name="Fujii C.Y."/>
            <person name="Gill J.E."/>
            <person name="Goldsmith A.D."/>
            <person name="Haas B."/>
            <person name="Hansen N.F."/>
            <person name="Hughes B."/>
            <person name="Huizar L."/>
            <person name="Hunter J.L."/>
            <person name="Jenkins J."/>
            <person name="Johnson-Hopson C."/>
            <person name="Khan S."/>
            <person name="Khaykin E."/>
            <person name="Kim C.J."/>
            <person name="Koo H.L."/>
            <person name="Kremenetskaia I."/>
            <person name="Kurtz D.B."/>
            <person name="Kwan A."/>
            <person name="Lam B."/>
            <person name="Langin-Hooper S."/>
            <person name="Lee A."/>
            <person name="Lee J.M."/>
            <person name="Lenz C.A."/>
            <person name="Li J.H."/>
            <person name="Li Y.-P."/>
            <person name="Lin X."/>
            <person name="Liu S.X."/>
            <person name="Liu Z.A."/>
            <person name="Luros J.S."/>
            <person name="Maiti R."/>
            <person name="Marziali A."/>
            <person name="Militscher J."/>
            <person name="Miranda M."/>
            <person name="Nguyen M."/>
            <person name="Nierman W.C."/>
            <person name="Osborne B.I."/>
            <person name="Pai G."/>
            <person name="Peterson J."/>
            <person name="Pham P.K."/>
            <person name="Rizzo M."/>
            <person name="Rooney T."/>
            <person name="Rowley D."/>
            <person name="Sakano H."/>
            <person name="Salzberg S.L."/>
            <person name="Schwartz J.R."/>
            <person name="Shinn P."/>
            <person name="Southwick A.M."/>
            <person name="Sun H."/>
            <person name="Tallon L.J."/>
            <person name="Tambunga G."/>
            <person name="Toriumi M.J."/>
            <person name="Town C.D."/>
            <person name="Utterback T."/>
            <person name="Van Aken S."/>
            <person name="Vaysberg M."/>
            <person name="Vysotskaia V.S."/>
            <person name="Walker M."/>
            <person name="Wu D."/>
            <person name="Yu G."/>
            <person name="Fraser C.M."/>
            <person name="Venter J.C."/>
            <person name="Davis R.W."/>
        </authorList>
    </citation>
    <scope>NUCLEOTIDE SEQUENCE [LARGE SCALE GENOMIC DNA]</scope>
    <source>
        <strain>cv. Columbia</strain>
    </source>
</reference>
<reference key="2">
    <citation type="journal article" date="2017" name="Plant J.">
        <title>Araport11: a complete reannotation of the Arabidopsis thaliana reference genome.</title>
        <authorList>
            <person name="Cheng C.Y."/>
            <person name="Krishnakumar V."/>
            <person name="Chan A.P."/>
            <person name="Thibaud-Nissen F."/>
            <person name="Schobel S."/>
            <person name="Town C.D."/>
        </authorList>
    </citation>
    <scope>GENOME REANNOTATION</scope>
    <source>
        <strain>cv. Columbia</strain>
    </source>
</reference>
<reference key="3">
    <citation type="submission" date="2003-12" db="EMBL/GenBank/DDBJ databases">
        <title>Arabidopsis ORF clones.</title>
        <authorList>
            <person name="Kim C.J."/>
            <person name="Chen H."/>
            <person name="Cheuk R.F."/>
            <person name="Shinn P."/>
            <person name="Ecker J.R."/>
        </authorList>
    </citation>
    <scope>NUCLEOTIDE SEQUENCE [LARGE SCALE MRNA]</scope>
    <source>
        <strain>cv. Columbia</strain>
    </source>
</reference>
<reference key="4">
    <citation type="submission" date="2004-09" db="EMBL/GenBank/DDBJ databases">
        <title>Large-scale analysis of RIKEN Arabidopsis full-length (RAFL) cDNAs.</title>
        <authorList>
            <person name="Totoki Y."/>
            <person name="Seki M."/>
            <person name="Ishida J."/>
            <person name="Nakajima M."/>
            <person name="Enju A."/>
            <person name="Kamiya A."/>
            <person name="Narusaka M."/>
            <person name="Shin-i T."/>
            <person name="Nakagawa M."/>
            <person name="Sakamoto N."/>
            <person name="Oishi K."/>
            <person name="Kohara Y."/>
            <person name="Kobayashi M."/>
            <person name="Toyoda A."/>
            <person name="Sakaki Y."/>
            <person name="Sakurai T."/>
            <person name="Iida K."/>
            <person name="Akiyama K."/>
            <person name="Satou M."/>
            <person name="Toyoda T."/>
            <person name="Konagaya A."/>
            <person name="Carninci P."/>
            <person name="Kawai J."/>
            <person name="Hayashizaki Y."/>
            <person name="Shinozaki K."/>
        </authorList>
    </citation>
    <scope>NUCLEOTIDE SEQUENCE [LARGE SCALE MRNA]</scope>
    <source>
        <strain>cv. Columbia</strain>
    </source>
</reference>
<reference key="5">
    <citation type="journal article" date="2009" name="Biosci. Biotechnol. Biochem.">
        <title>Chemical genetics reveal the novel transmembrane protein BIL4, which mediates plant cell elongation in brassinosteroid signaling.</title>
        <authorList>
            <person name="Yamagami A."/>
            <person name="Nakazawa M."/>
            <person name="Matsui M."/>
            <person name="Tujimoto M."/>
            <person name="Sakuta M."/>
            <person name="Asami T."/>
            <person name="Nakano T."/>
        </authorList>
    </citation>
    <scope>GENE FAMILY</scope>
</reference>
<reference key="6">
    <citation type="journal article" date="2013" name="J. Exp. Bot.">
        <title>LIFEGUARD proteins support plant colonization by biotrophic powdery mildew fungi.</title>
        <authorList>
            <person name="Weis C."/>
            <person name="Hueckelhoven R."/>
            <person name="Eichmann R."/>
        </authorList>
    </citation>
    <scope>GENE FAMILY</scope>
    <scope>NOMENCLATURE</scope>
    <source>
        <strain>cv. Columbia</strain>
    </source>
</reference>
<comment type="subcellular location">
    <subcellularLocation>
        <location evidence="1">Membrane</location>
        <topology evidence="1">Multi-pass membrane protein</topology>
    </subcellularLocation>
</comment>
<comment type="similarity">
    <text evidence="3">Belongs to the BI1 family.</text>
</comment>
<feature type="chain" id="PRO_0000441632" description="Protein LIFEGUARD 4">
    <location>
        <begin position="1"/>
        <end position="247"/>
    </location>
</feature>
<feature type="transmembrane region" description="Helical" evidence="1">
    <location>
        <begin position="42"/>
        <end position="62"/>
    </location>
</feature>
<feature type="transmembrane region" description="Helical" evidence="1">
    <location>
        <begin position="75"/>
        <end position="95"/>
    </location>
</feature>
<feature type="transmembrane region" description="Helical" evidence="1">
    <location>
        <begin position="105"/>
        <end position="125"/>
    </location>
</feature>
<feature type="transmembrane region" description="Helical" evidence="1">
    <location>
        <begin position="130"/>
        <end position="150"/>
    </location>
</feature>
<feature type="transmembrane region" description="Helical" evidence="1">
    <location>
        <begin position="165"/>
        <end position="185"/>
    </location>
</feature>
<feature type="transmembrane region" description="Helical" evidence="1">
    <location>
        <begin position="188"/>
        <end position="208"/>
    </location>
</feature>
<feature type="transmembrane region" description="Helical" evidence="1">
    <location>
        <begin position="222"/>
        <end position="242"/>
    </location>
</feature>
<name>LFG4_ARATH</name>
<dbReference type="EMBL" id="AC006550">
    <property type="protein sequence ID" value="AAD25802.1"/>
    <property type="molecule type" value="Genomic_DNA"/>
</dbReference>
<dbReference type="EMBL" id="CP002684">
    <property type="protein sequence ID" value="AEE27524.1"/>
    <property type="molecule type" value="Genomic_DNA"/>
</dbReference>
<dbReference type="EMBL" id="CP002684">
    <property type="protein sequence ID" value="AEE27525.1"/>
    <property type="molecule type" value="Genomic_DNA"/>
</dbReference>
<dbReference type="EMBL" id="CP002684">
    <property type="protein sequence ID" value="ANM58047.1"/>
    <property type="molecule type" value="Genomic_DNA"/>
</dbReference>
<dbReference type="EMBL" id="BT010903">
    <property type="protein sequence ID" value="AAR24681.1"/>
    <property type="molecule type" value="mRNA"/>
</dbReference>
<dbReference type="EMBL" id="AK175449">
    <property type="protein sequence ID" value="BAD43212.1"/>
    <property type="molecule type" value="mRNA"/>
</dbReference>
<dbReference type="PIR" id="E86161">
    <property type="entry name" value="E86161"/>
</dbReference>
<dbReference type="RefSeq" id="NP_001184896.1">
    <property type="nucleotide sequence ID" value="NM_001197967.2"/>
</dbReference>
<dbReference type="RefSeq" id="NP_001320512.1">
    <property type="nucleotide sequence ID" value="NM_001331384.1"/>
</dbReference>
<dbReference type="RefSeq" id="NP_171806.1">
    <property type="nucleotide sequence ID" value="NM_100189.3"/>
</dbReference>
<dbReference type="SMR" id="Q9SA63"/>
<dbReference type="FunCoup" id="Q9SA63">
    <property type="interactions" value="3134"/>
</dbReference>
<dbReference type="IntAct" id="Q9SA63">
    <property type="interactions" value="18"/>
</dbReference>
<dbReference type="STRING" id="3702.Q9SA63"/>
<dbReference type="PaxDb" id="3702-AT1G03070.2"/>
<dbReference type="ProteomicsDB" id="238457"/>
<dbReference type="EnsemblPlants" id="AT1G03070.1">
    <property type="protein sequence ID" value="AT1G03070.1"/>
    <property type="gene ID" value="AT1G03070"/>
</dbReference>
<dbReference type="EnsemblPlants" id="AT1G03070.2">
    <property type="protein sequence ID" value="AT1G03070.2"/>
    <property type="gene ID" value="AT1G03070"/>
</dbReference>
<dbReference type="EnsemblPlants" id="AT1G03070.3">
    <property type="protein sequence ID" value="AT1G03070.3"/>
    <property type="gene ID" value="AT1G03070"/>
</dbReference>
<dbReference type="GeneID" id="839581"/>
<dbReference type="Gramene" id="AT1G03070.1">
    <property type="protein sequence ID" value="AT1G03070.1"/>
    <property type="gene ID" value="AT1G03070"/>
</dbReference>
<dbReference type="Gramene" id="AT1G03070.2">
    <property type="protein sequence ID" value="AT1G03070.2"/>
    <property type="gene ID" value="AT1G03070"/>
</dbReference>
<dbReference type="Gramene" id="AT1G03070.3">
    <property type="protein sequence ID" value="AT1G03070.3"/>
    <property type="gene ID" value="AT1G03070"/>
</dbReference>
<dbReference type="KEGG" id="ath:AT1G03070"/>
<dbReference type="Araport" id="AT1G03070"/>
<dbReference type="TAIR" id="AT1G03070">
    <property type="gene designation" value="LFG4"/>
</dbReference>
<dbReference type="eggNOG" id="KOG2322">
    <property type="taxonomic scope" value="Eukaryota"/>
</dbReference>
<dbReference type="HOGENOM" id="CLU_058671_0_1_1"/>
<dbReference type="InParanoid" id="Q9SA63"/>
<dbReference type="OMA" id="CDFTGCW"/>
<dbReference type="PhylomeDB" id="Q9SA63"/>
<dbReference type="PRO" id="PR:Q9SA63"/>
<dbReference type="Proteomes" id="UP000006548">
    <property type="component" value="Chromosome 1"/>
</dbReference>
<dbReference type="ExpressionAtlas" id="Q9SA63">
    <property type="expression patterns" value="baseline and differential"/>
</dbReference>
<dbReference type="GO" id="GO:0016020">
    <property type="term" value="C:membrane"/>
    <property type="evidence" value="ECO:0007669"/>
    <property type="project" value="UniProtKB-SubCell"/>
</dbReference>
<dbReference type="CDD" id="cd10429">
    <property type="entry name" value="GAAP_like"/>
    <property type="match status" value="1"/>
</dbReference>
<dbReference type="InterPro" id="IPR006214">
    <property type="entry name" value="Bax_inhibitor_1-related"/>
</dbReference>
<dbReference type="PANTHER" id="PTHR23291">
    <property type="entry name" value="BAX INHIBITOR-RELATED"/>
    <property type="match status" value="1"/>
</dbReference>
<dbReference type="PANTHER" id="PTHR23291:SF31">
    <property type="entry name" value="PROTEIN LIFEGUARD 4"/>
    <property type="match status" value="1"/>
</dbReference>
<dbReference type="Pfam" id="PF01027">
    <property type="entry name" value="Bax1-I"/>
    <property type="match status" value="1"/>
</dbReference>
<protein>
    <recommendedName>
        <fullName evidence="2">Protein LIFEGUARD 4</fullName>
        <shortName evidence="2">AtLFG4</shortName>
    </recommendedName>
</protein>
<accession>Q9SA63</accession>
<sequence length="247" mass="27882">MYKWNLPYRKDDVETGREGGERSLYPTMLESPELRWGFIRKVYSIIAFQLLATIAVASTVVFVRPIAVFFATTSAGLALWIVLIITPLIVMCPLYYYHQKHPVNYLLLGIFTVALAFAVGLTCAFTSGKVILEAAILTTVVVLSLTVYTFWAAKKGYDFNFLGPFLFGALIVLMVFALIQIFFPLGRISVMIYGCLAAIIFCGYIVYDTDNLIKRYSYDEYIWAAVSLYLDIINLFLALLTIFRAAE</sequence>
<keyword id="KW-0472">Membrane</keyword>
<keyword id="KW-1185">Reference proteome</keyword>
<keyword id="KW-0812">Transmembrane</keyword>
<keyword id="KW-1133">Transmembrane helix</keyword>
<evidence type="ECO:0000255" key="1"/>
<evidence type="ECO:0000303" key="2">
    <source>
    </source>
</evidence>
<evidence type="ECO:0000305" key="3"/>
<evidence type="ECO:0000312" key="4">
    <source>
        <dbReference type="Araport" id="AT1G03070"/>
    </source>
</evidence>
<evidence type="ECO:0000312" key="5">
    <source>
        <dbReference type="EMBL" id="AAD25802.1"/>
    </source>
</evidence>
<proteinExistence type="evidence at transcript level"/>